<gene>
    <name type="primary">cls</name>
    <name type="ordered locus">MW2011</name>
</gene>
<comment type="function">
    <text evidence="1">Catalyzes the reversible phosphatidyl group transfer from one phosphatidylglycerol molecule to another to form cardiolipin (CL) (diphosphatidylglycerol) and glycerol.</text>
</comment>
<comment type="catalytic activity">
    <reaction evidence="1">
        <text>2 a 1,2-diacyl-sn-glycero-3-phospho-(1'-sn-glycerol) = a cardiolipin + glycerol</text>
        <dbReference type="Rhea" id="RHEA:31451"/>
        <dbReference type="ChEBI" id="CHEBI:17754"/>
        <dbReference type="ChEBI" id="CHEBI:62237"/>
        <dbReference type="ChEBI" id="CHEBI:64716"/>
    </reaction>
</comment>
<comment type="subcellular location">
    <subcellularLocation>
        <location evidence="1">Cell membrane</location>
        <topology evidence="1">Multi-pass membrane protein</topology>
    </subcellularLocation>
</comment>
<comment type="similarity">
    <text evidence="1">Belongs to the phospholipase D family. Cardiolipin synthase subfamily.</text>
</comment>
<feature type="chain" id="PRO_0000201274" description="Cardiolipin synthase">
    <location>
        <begin position="1"/>
        <end position="494"/>
    </location>
</feature>
<feature type="transmembrane region" description="Helical" evidence="1">
    <location>
        <begin position="14"/>
        <end position="34"/>
    </location>
</feature>
<feature type="transmembrane region" description="Helical" evidence="1">
    <location>
        <begin position="45"/>
        <end position="65"/>
    </location>
</feature>
<feature type="domain" description="PLD phosphodiesterase 1" evidence="1">
    <location>
        <begin position="229"/>
        <end position="256"/>
    </location>
</feature>
<feature type="domain" description="PLD phosphodiesterase 2" evidence="1">
    <location>
        <begin position="407"/>
        <end position="434"/>
    </location>
</feature>
<feature type="active site" evidence="1">
    <location>
        <position position="234"/>
    </location>
</feature>
<feature type="active site" evidence="1">
    <location>
        <position position="236"/>
    </location>
</feature>
<feature type="active site" evidence="1">
    <location>
        <position position="241"/>
    </location>
</feature>
<feature type="active site" evidence="1">
    <location>
        <position position="412"/>
    </location>
</feature>
<feature type="active site" evidence="1">
    <location>
        <position position="414"/>
    </location>
</feature>
<feature type="active site" evidence="1">
    <location>
        <position position="419"/>
    </location>
</feature>
<dbReference type="EC" id="2.7.8.-" evidence="1"/>
<dbReference type="EMBL" id="BA000033">
    <property type="protein sequence ID" value="BAB95876.1"/>
    <property type="molecule type" value="Genomic_DNA"/>
</dbReference>
<dbReference type="RefSeq" id="WP_000571549.1">
    <property type="nucleotide sequence ID" value="NC_003923.1"/>
</dbReference>
<dbReference type="SMR" id="P63802"/>
<dbReference type="KEGG" id="sam:MW2011"/>
<dbReference type="HOGENOM" id="CLU_038053_1_1_9"/>
<dbReference type="GO" id="GO:0005886">
    <property type="term" value="C:plasma membrane"/>
    <property type="evidence" value="ECO:0007669"/>
    <property type="project" value="UniProtKB-SubCell"/>
</dbReference>
<dbReference type="GO" id="GO:0008808">
    <property type="term" value="F:cardiolipin synthase activity"/>
    <property type="evidence" value="ECO:0007669"/>
    <property type="project" value="InterPro"/>
</dbReference>
<dbReference type="GO" id="GO:0032049">
    <property type="term" value="P:cardiolipin biosynthetic process"/>
    <property type="evidence" value="ECO:0007669"/>
    <property type="project" value="InterPro"/>
</dbReference>
<dbReference type="CDD" id="cd09110">
    <property type="entry name" value="PLDc_CLS_1"/>
    <property type="match status" value="1"/>
</dbReference>
<dbReference type="CDD" id="cd09112">
    <property type="entry name" value="PLDc_CLS_2"/>
    <property type="match status" value="1"/>
</dbReference>
<dbReference type="FunFam" id="3.30.870.10:FF:000014">
    <property type="entry name" value="Cardiolipin synthase"/>
    <property type="match status" value="1"/>
</dbReference>
<dbReference type="FunFam" id="3.30.870.10:FF:000021">
    <property type="entry name" value="Cardiolipin synthase"/>
    <property type="match status" value="1"/>
</dbReference>
<dbReference type="Gene3D" id="3.30.870.10">
    <property type="entry name" value="Endonuclease Chain A"/>
    <property type="match status" value="2"/>
</dbReference>
<dbReference type="HAMAP" id="MF_01916">
    <property type="entry name" value="Cardiolipin_synth_Cls"/>
    <property type="match status" value="1"/>
</dbReference>
<dbReference type="InterPro" id="IPR030874">
    <property type="entry name" value="Cardiolipin_synth_Firmi"/>
</dbReference>
<dbReference type="InterPro" id="IPR022924">
    <property type="entry name" value="Cardiolipin_synthase"/>
</dbReference>
<dbReference type="InterPro" id="IPR027379">
    <property type="entry name" value="CLS_N"/>
</dbReference>
<dbReference type="InterPro" id="IPR025202">
    <property type="entry name" value="PLD-like_dom"/>
</dbReference>
<dbReference type="InterPro" id="IPR001736">
    <property type="entry name" value="PLipase_D/transphosphatidylase"/>
</dbReference>
<dbReference type="NCBIfam" id="TIGR04265">
    <property type="entry name" value="bac_cardiolipin"/>
    <property type="match status" value="1"/>
</dbReference>
<dbReference type="PANTHER" id="PTHR21248">
    <property type="entry name" value="CARDIOLIPIN SYNTHASE"/>
    <property type="match status" value="1"/>
</dbReference>
<dbReference type="PANTHER" id="PTHR21248:SF22">
    <property type="entry name" value="PHOSPHOLIPASE D"/>
    <property type="match status" value="1"/>
</dbReference>
<dbReference type="Pfam" id="PF13091">
    <property type="entry name" value="PLDc_2"/>
    <property type="match status" value="2"/>
</dbReference>
<dbReference type="Pfam" id="PF13396">
    <property type="entry name" value="PLDc_N"/>
    <property type="match status" value="1"/>
</dbReference>
<dbReference type="SMART" id="SM00155">
    <property type="entry name" value="PLDc"/>
    <property type="match status" value="2"/>
</dbReference>
<dbReference type="SUPFAM" id="SSF56024">
    <property type="entry name" value="Phospholipase D/nuclease"/>
    <property type="match status" value="2"/>
</dbReference>
<dbReference type="PROSITE" id="PS50035">
    <property type="entry name" value="PLD"/>
    <property type="match status" value="2"/>
</dbReference>
<keyword id="KW-1003">Cell membrane</keyword>
<keyword id="KW-0444">Lipid biosynthesis</keyword>
<keyword id="KW-0443">Lipid metabolism</keyword>
<keyword id="KW-0472">Membrane</keyword>
<keyword id="KW-0594">Phospholipid biosynthesis</keyword>
<keyword id="KW-1208">Phospholipid metabolism</keyword>
<keyword id="KW-0677">Repeat</keyword>
<keyword id="KW-0808">Transferase</keyword>
<keyword id="KW-0812">Transmembrane</keyword>
<keyword id="KW-1133">Transmembrane helix</keyword>
<proteinExistence type="inferred from homology"/>
<name>CLS_STAAW</name>
<organism>
    <name type="scientific">Staphylococcus aureus (strain MW2)</name>
    <dbReference type="NCBI Taxonomy" id="196620"/>
    <lineage>
        <taxon>Bacteria</taxon>
        <taxon>Bacillati</taxon>
        <taxon>Bacillota</taxon>
        <taxon>Bacilli</taxon>
        <taxon>Bacillales</taxon>
        <taxon>Staphylococcaceae</taxon>
        <taxon>Staphylococcus</taxon>
    </lineage>
</organism>
<accession>P63802</accession>
<accession>Q99SG9</accession>
<evidence type="ECO:0000255" key="1">
    <source>
        <dbReference type="HAMAP-Rule" id="MF_01916"/>
    </source>
</evidence>
<sequence>MIELLSIALKHSNIILNSIFIGAFILNLLFAFTIIFMERRSANSIWAWLLVLVFLPLFGFILYLLLGRQIQRDQIFKIDKEDKKGLELIVDEQLAALKNENFSNSNYQIVKFKEMIQMLLYNNAAFLTTDNDLKIYTDGQEKFDDLIQDIRNATDYIHFQYYIIQNDELGRTILNELGKKAEQGVEVKILYDDMGSRGLRKKGLRPFRNKGGHAEAFFPSKLPLINLRMNNRNHRKIVVIDGQIGYVGGFNVGDEYLGKSKKFGYWRDTHLRIVGDAVNALQLRFILDWNSQATRDHISYDDRYFPDVNSGGTIGVQIASSGPDEEWEQIKYGYLKMISSAKKSIYIQSPYFIPDQAFLDSIKIAALGGVDVNIMIPNKPDHPFVFWATLKNAASLLDAGVKVFHYDNGFLHSKTLVIDDEIASVGTANMDHRSFTLNFEVNAFIYDQQIAKKLKQAFIDDLAVSSELTKARYAKRSLWIKFKEGISQLLSPIL</sequence>
<reference key="1">
    <citation type="journal article" date="2002" name="Lancet">
        <title>Genome and virulence determinants of high virulence community-acquired MRSA.</title>
        <authorList>
            <person name="Baba T."/>
            <person name="Takeuchi F."/>
            <person name="Kuroda M."/>
            <person name="Yuzawa H."/>
            <person name="Aoki K."/>
            <person name="Oguchi A."/>
            <person name="Nagai Y."/>
            <person name="Iwama N."/>
            <person name="Asano K."/>
            <person name="Naimi T."/>
            <person name="Kuroda H."/>
            <person name="Cui L."/>
            <person name="Yamamoto K."/>
            <person name="Hiramatsu K."/>
        </authorList>
    </citation>
    <scope>NUCLEOTIDE SEQUENCE [LARGE SCALE GENOMIC DNA]</scope>
    <source>
        <strain>MW2</strain>
    </source>
</reference>
<protein>
    <recommendedName>
        <fullName evidence="1">Cardiolipin synthase</fullName>
        <shortName evidence="1">CL synthase</shortName>
        <ecNumber evidence="1">2.7.8.-</ecNumber>
    </recommendedName>
</protein>